<comment type="function">
    <text evidence="1">Attaches a formyl group to the free amino group of methionyl-tRNA(fMet). The formyl group appears to play a dual role in the initiator identity of N-formylmethionyl-tRNA by promoting its recognition by IF2 and preventing the misappropriation of this tRNA by the elongation apparatus.</text>
</comment>
<comment type="catalytic activity">
    <reaction evidence="1">
        <text>L-methionyl-tRNA(fMet) + (6R)-10-formyltetrahydrofolate = N-formyl-L-methionyl-tRNA(fMet) + (6S)-5,6,7,8-tetrahydrofolate + H(+)</text>
        <dbReference type="Rhea" id="RHEA:24380"/>
        <dbReference type="Rhea" id="RHEA-COMP:9952"/>
        <dbReference type="Rhea" id="RHEA-COMP:9953"/>
        <dbReference type="ChEBI" id="CHEBI:15378"/>
        <dbReference type="ChEBI" id="CHEBI:57453"/>
        <dbReference type="ChEBI" id="CHEBI:78530"/>
        <dbReference type="ChEBI" id="CHEBI:78844"/>
        <dbReference type="ChEBI" id="CHEBI:195366"/>
        <dbReference type="EC" id="2.1.2.9"/>
    </reaction>
</comment>
<comment type="similarity">
    <text evidence="1">Belongs to the Fmt family.</text>
</comment>
<organism>
    <name type="scientific">Vibrio vulnificus (strain YJ016)</name>
    <dbReference type="NCBI Taxonomy" id="196600"/>
    <lineage>
        <taxon>Bacteria</taxon>
        <taxon>Pseudomonadati</taxon>
        <taxon>Pseudomonadota</taxon>
        <taxon>Gammaproteobacteria</taxon>
        <taxon>Vibrionales</taxon>
        <taxon>Vibrionaceae</taxon>
        <taxon>Vibrio</taxon>
    </lineage>
</organism>
<gene>
    <name evidence="1" type="primary">fmt</name>
    <name type="ordered locus">VV3226</name>
</gene>
<keyword id="KW-0648">Protein biosynthesis</keyword>
<keyword id="KW-0808">Transferase</keyword>
<protein>
    <recommendedName>
        <fullName evidence="1">Methionyl-tRNA formyltransferase</fullName>
        <ecNumber evidence="1">2.1.2.9</ecNumber>
    </recommendedName>
</protein>
<proteinExistence type="inferred from homology"/>
<name>FMT_VIBVY</name>
<reference key="1">
    <citation type="journal article" date="2003" name="Genome Res.">
        <title>Comparative genome analysis of Vibrio vulnificus, a marine pathogen.</title>
        <authorList>
            <person name="Chen C.-Y."/>
            <person name="Wu K.-M."/>
            <person name="Chang Y.-C."/>
            <person name="Chang C.-H."/>
            <person name="Tsai H.-C."/>
            <person name="Liao T.-L."/>
            <person name="Liu Y.-M."/>
            <person name="Chen H.-J."/>
            <person name="Shen A.B.-T."/>
            <person name="Li J.-C."/>
            <person name="Su T.-L."/>
            <person name="Shao C.-P."/>
            <person name="Lee C.-T."/>
            <person name="Hor L.-I."/>
            <person name="Tsai S.-F."/>
        </authorList>
    </citation>
    <scope>NUCLEOTIDE SEQUENCE [LARGE SCALE GENOMIC DNA]</scope>
    <source>
        <strain>YJ016</strain>
    </source>
</reference>
<evidence type="ECO:0000255" key="1">
    <source>
        <dbReference type="HAMAP-Rule" id="MF_00182"/>
    </source>
</evidence>
<dbReference type="EC" id="2.1.2.9" evidence="1"/>
<dbReference type="EMBL" id="BA000037">
    <property type="protein sequence ID" value="BAC95990.1"/>
    <property type="molecule type" value="Genomic_DNA"/>
</dbReference>
<dbReference type="RefSeq" id="WP_011151423.1">
    <property type="nucleotide sequence ID" value="NC_005139.1"/>
</dbReference>
<dbReference type="SMR" id="Q7MGK5"/>
<dbReference type="STRING" id="672.VV93_v1c29480"/>
<dbReference type="KEGG" id="vvy:VV3226"/>
<dbReference type="eggNOG" id="COG0223">
    <property type="taxonomic scope" value="Bacteria"/>
</dbReference>
<dbReference type="HOGENOM" id="CLU_033347_1_2_6"/>
<dbReference type="Proteomes" id="UP000002675">
    <property type="component" value="Chromosome I"/>
</dbReference>
<dbReference type="GO" id="GO:0005829">
    <property type="term" value="C:cytosol"/>
    <property type="evidence" value="ECO:0007669"/>
    <property type="project" value="TreeGrafter"/>
</dbReference>
<dbReference type="GO" id="GO:0004479">
    <property type="term" value="F:methionyl-tRNA formyltransferase activity"/>
    <property type="evidence" value="ECO:0007669"/>
    <property type="project" value="UniProtKB-UniRule"/>
</dbReference>
<dbReference type="CDD" id="cd08646">
    <property type="entry name" value="FMT_core_Met-tRNA-FMT_N"/>
    <property type="match status" value="1"/>
</dbReference>
<dbReference type="CDD" id="cd08704">
    <property type="entry name" value="Met_tRNA_FMT_C"/>
    <property type="match status" value="1"/>
</dbReference>
<dbReference type="FunFam" id="3.40.50.170:FF:000003">
    <property type="entry name" value="Methionyl-tRNA formyltransferase"/>
    <property type="match status" value="1"/>
</dbReference>
<dbReference type="Gene3D" id="3.10.25.10">
    <property type="entry name" value="Formyl transferase, C-terminal domain"/>
    <property type="match status" value="1"/>
</dbReference>
<dbReference type="Gene3D" id="3.40.50.170">
    <property type="entry name" value="Formyl transferase, N-terminal domain"/>
    <property type="match status" value="1"/>
</dbReference>
<dbReference type="HAMAP" id="MF_00182">
    <property type="entry name" value="Formyl_trans"/>
    <property type="match status" value="1"/>
</dbReference>
<dbReference type="InterPro" id="IPR005794">
    <property type="entry name" value="Fmt"/>
</dbReference>
<dbReference type="InterPro" id="IPR005793">
    <property type="entry name" value="Formyl_trans_C"/>
</dbReference>
<dbReference type="InterPro" id="IPR037022">
    <property type="entry name" value="Formyl_trans_C_sf"/>
</dbReference>
<dbReference type="InterPro" id="IPR002376">
    <property type="entry name" value="Formyl_transf_N"/>
</dbReference>
<dbReference type="InterPro" id="IPR036477">
    <property type="entry name" value="Formyl_transf_N_sf"/>
</dbReference>
<dbReference type="InterPro" id="IPR011034">
    <property type="entry name" value="Formyl_transferase-like_C_sf"/>
</dbReference>
<dbReference type="InterPro" id="IPR001555">
    <property type="entry name" value="GART_AS"/>
</dbReference>
<dbReference type="InterPro" id="IPR044135">
    <property type="entry name" value="Met-tRNA-FMT_C"/>
</dbReference>
<dbReference type="InterPro" id="IPR041711">
    <property type="entry name" value="Met-tRNA-FMT_N"/>
</dbReference>
<dbReference type="NCBIfam" id="TIGR00460">
    <property type="entry name" value="fmt"/>
    <property type="match status" value="1"/>
</dbReference>
<dbReference type="PANTHER" id="PTHR11138">
    <property type="entry name" value="METHIONYL-TRNA FORMYLTRANSFERASE"/>
    <property type="match status" value="1"/>
</dbReference>
<dbReference type="PANTHER" id="PTHR11138:SF5">
    <property type="entry name" value="METHIONYL-TRNA FORMYLTRANSFERASE, MITOCHONDRIAL"/>
    <property type="match status" value="1"/>
</dbReference>
<dbReference type="Pfam" id="PF02911">
    <property type="entry name" value="Formyl_trans_C"/>
    <property type="match status" value="1"/>
</dbReference>
<dbReference type="Pfam" id="PF00551">
    <property type="entry name" value="Formyl_trans_N"/>
    <property type="match status" value="1"/>
</dbReference>
<dbReference type="SUPFAM" id="SSF50486">
    <property type="entry name" value="FMT C-terminal domain-like"/>
    <property type="match status" value="1"/>
</dbReference>
<dbReference type="SUPFAM" id="SSF53328">
    <property type="entry name" value="Formyltransferase"/>
    <property type="match status" value="1"/>
</dbReference>
<dbReference type="PROSITE" id="PS00373">
    <property type="entry name" value="GART"/>
    <property type="match status" value="1"/>
</dbReference>
<feature type="chain" id="PRO_0000083084" description="Methionyl-tRNA formyltransferase">
    <location>
        <begin position="1"/>
        <end position="315"/>
    </location>
</feature>
<feature type="binding site" evidence="1">
    <location>
        <begin position="113"/>
        <end position="116"/>
    </location>
    <ligand>
        <name>(6S)-5,6,7,8-tetrahydrofolate</name>
        <dbReference type="ChEBI" id="CHEBI:57453"/>
    </ligand>
</feature>
<accession>Q7MGK5</accession>
<sequence>MSKPLRIVFAGTPDFAAQHLAALLSSEHEVIAVYTQPDRPAGRGKKLTASPVKTIALEHNIPVYQPENFKSDEAKQALADLNADIMVVVAYGLLLPQAVLDTPKLGCINVHGSILPRWRGAAPIQRSIWAGDAETGVTIMQMDIGLDTGDMLKIATLPIDASDTSATMYDKLAKLGPVALVECLADIAAGTAIAIKQDDERANYAKKLSKEEARINWQDDAEHIERCVRAFNPWPMSHFEVAENSIKVWQSRVEASSHDAPAGTILKADKSGIYIATGHGCLVLEQIQIPGKKAMPVQDVLNARAAWFEVGSVLS</sequence>